<proteinExistence type="evidence at transcript level"/>
<feature type="chain" id="PRO_0000363318" description="Probable protein phosphatase 2C 71">
    <location>
        <begin position="1"/>
        <end position="465"/>
    </location>
</feature>
<feature type="domain" description="PPM-type phosphatase" evidence="2">
    <location>
        <begin position="222"/>
        <end position="460"/>
    </location>
</feature>
<feature type="region of interest" description="Disordered" evidence="3">
    <location>
        <begin position="14"/>
        <end position="47"/>
    </location>
</feature>
<feature type="region of interest" description="Disordered" evidence="3">
    <location>
        <begin position="68"/>
        <end position="119"/>
    </location>
</feature>
<feature type="region of interest" description="Disordered" evidence="3">
    <location>
        <begin position="133"/>
        <end position="191"/>
    </location>
</feature>
<feature type="compositionally biased region" description="Pro residues" evidence="3">
    <location>
        <begin position="18"/>
        <end position="30"/>
    </location>
</feature>
<feature type="compositionally biased region" description="Low complexity" evidence="3">
    <location>
        <begin position="84"/>
        <end position="106"/>
    </location>
</feature>
<feature type="compositionally biased region" description="Low complexity" evidence="3">
    <location>
        <begin position="133"/>
        <end position="143"/>
    </location>
</feature>
<feature type="binding site" evidence="1">
    <location>
        <position position="254"/>
    </location>
    <ligand>
        <name>Mn(2+)</name>
        <dbReference type="ChEBI" id="CHEBI:29035"/>
        <label>1</label>
    </ligand>
</feature>
<feature type="binding site" evidence="1">
    <location>
        <position position="254"/>
    </location>
    <ligand>
        <name>Mn(2+)</name>
        <dbReference type="ChEBI" id="CHEBI:29035"/>
        <label>2</label>
    </ligand>
</feature>
<feature type="binding site" evidence="1">
    <location>
        <position position="255"/>
    </location>
    <ligand>
        <name>Mn(2+)</name>
        <dbReference type="ChEBI" id="CHEBI:29035"/>
        <label>1</label>
    </ligand>
</feature>
<feature type="binding site" evidence="1">
    <location>
        <position position="384"/>
    </location>
    <ligand>
        <name>Mn(2+)</name>
        <dbReference type="ChEBI" id="CHEBI:29035"/>
        <label>2</label>
    </ligand>
</feature>
<feature type="binding site" evidence="1">
    <location>
        <position position="451"/>
    </location>
    <ligand>
        <name>Mn(2+)</name>
        <dbReference type="ChEBI" id="CHEBI:29035"/>
        <label>2</label>
    </ligand>
</feature>
<reference key="1">
    <citation type="journal article" date="2003" name="Science">
        <title>In-depth view of structure, activity, and evolution of rice chromosome 10.</title>
        <authorList>
            <person name="Yu Y."/>
            <person name="Rambo T."/>
            <person name="Currie J."/>
            <person name="Saski C."/>
            <person name="Kim H.-R."/>
            <person name="Collura K."/>
            <person name="Thompson S."/>
            <person name="Simmons J."/>
            <person name="Yang T.-J."/>
            <person name="Nah G."/>
            <person name="Patel A.J."/>
            <person name="Thurmond S."/>
            <person name="Henry D."/>
            <person name="Oates R."/>
            <person name="Palmer M."/>
            <person name="Pries G."/>
            <person name="Gibson J."/>
            <person name="Anderson H."/>
            <person name="Paradkar M."/>
            <person name="Crane L."/>
            <person name="Dale J."/>
            <person name="Carver M.B."/>
            <person name="Wood T."/>
            <person name="Frisch D."/>
            <person name="Engler F."/>
            <person name="Soderlund C."/>
            <person name="Palmer L.E."/>
            <person name="Teytelman L."/>
            <person name="Nascimento L."/>
            <person name="De la Bastide M."/>
            <person name="Spiegel L."/>
            <person name="Ware D."/>
            <person name="O'Shaughnessy A."/>
            <person name="Dike S."/>
            <person name="Dedhia N."/>
            <person name="Preston R."/>
            <person name="Huang E."/>
            <person name="Ferraro K."/>
            <person name="Kuit K."/>
            <person name="Miller B."/>
            <person name="Zutavern T."/>
            <person name="Katzenberger F."/>
            <person name="Muller S."/>
            <person name="Balija V."/>
            <person name="Martienssen R.A."/>
            <person name="Stein L."/>
            <person name="Minx P."/>
            <person name="Johnson D."/>
            <person name="Cordum H."/>
            <person name="Mardis E."/>
            <person name="Cheng Z."/>
            <person name="Jiang J."/>
            <person name="Wilson R."/>
            <person name="McCombie W.R."/>
            <person name="Wing R.A."/>
            <person name="Yuan Q."/>
            <person name="Ouyang S."/>
            <person name="Liu J."/>
            <person name="Jones K.M."/>
            <person name="Gansberger K."/>
            <person name="Moffat K."/>
            <person name="Hill J."/>
            <person name="Tsitrin T."/>
            <person name="Overton L."/>
            <person name="Bera J."/>
            <person name="Kim M."/>
            <person name="Jin S."/>
            <person name="Tallon L."/>
            <person name="Ciecko A."/>
            <person name="Pai G."/>
            <person name="Van Aken S."/>
            <person name="Utterback T."/>
            <person name="Reidmuller S."/>
            <person name="Bormann J."/>
            <person name="Feldblyum T."/>
            <person name="Hsiao J."/>
            <person name="Zismann V."/>
            <person name="Blunt S."/>
            <person name="de Vazeille A.R."/>
            <person name="Shaffer T."/>
            <person name="Koo H."/>
            <person name="Suh B."/>
            <person name="Yang Q."/>
            <person name="Haas B."/>
            <person name="Peterson J."/>
            <person name="Pertea M."/>
            <person name="Volfovsky N."/>
            <person name="Wortman J."/>
            <person name="White O."/>
            <person name="Salzberg S.L."/>
            <person name="Fraser C.M."/>
            <person name="Buell C.R."/>
            <person name="Messing J."/>
            <person name="Song R."/>
            <person name="Fuks G."/>
            <person name="Llaca V."/>
            <person name="Kovchak S."/>
            <person name="Young S."/>
            <person name="Bowers J.E."/>
            <person name="Paterson A.H."/>
            <person name="Johns M.A."/>
            <person name="Mao L."/>
            <person name="Pan H."/>
            <person name="Dean R.A."/>
        </authorList>
    </citation>
    <scope>NUCLEOTIDE SEQUENCE [LARGE SCALE GENOMIC DNA]</scope>
    <source>
        <strain>cv. Nipponbare</strain>
    </source>
</reference>
<reference key="2">
    <citation type="journal article" date="2005" name="Nature">
        <title>The map-based sequence of the rice genome.</title>
        <authorList>
            <consortium name="International rice genome sequencing project (IRGSP)"/>
        </authorList>
    </citation>
    <scope>NUCLEOTIDE SEQUENCE [LARGE SCALE GENOMIC DNA]</scope>
    <source>
        <strain>cv. Nipponbare</strain>
    </source>
</reference>
<reference key="3">
    <citation type="journal article" date="2008" name="Nucleic Acids Res.">
        <title>The rice annotation project database (RAP-DB): 2008 update.</title>
        <authorList>
            <consortium name="The rice annotation project (RAP)"/>
        </authorList>
    </citation>
    <scope>GENOME REANNOTATION</scope>
    <source>
        <strain>cv. Nipponbare</strain>
    </source>
</reference>
<reference key="4">
    <citation type="journal article" date="2013" name="Rice">
        <title>Improvement of the Oryza sativa Nipponbare reference genome using next generation sequence and optical map data.</title>
        <authorList>
            <person name="Kawahara Y."/>
            <person name="de la Bastide M."/>
            <person name="Hamilton J.P."/>
            <person name="Kanamori H."/>
            <person name="McCombie W.R."/>
            <person name="Ouyang S."/>
            <person name="Schwartz D.C."/>
            <person name="Tanaka T."/>
            <person name="Wu J."/>
            <person name="Zhou S."/>
            <person name="Childs K.L."/>
            <person name="Davidson R.M."/>
            <person name="Lin H."/>
            <person name="Quesada-Ocampo L."/>
            <person name="Vaillancourt B."/>
            <person name="Sakai H."/>
            <person name="Lee S.S."/>
            <person name="Kim J."/>
            <person name="Numa H."/>
            <person name="Itoh T."/>
            <person name="Buell C.R."/>
            <person name="Matsumoto T."/>
        </authorList>
    </citation>
    <scope>GENOME REANNOTATION</scope>
    <source>
        <strain>cv. Nipponbare</strain>
    </source>
</reference>
<reference key="5">
    <citation type="journal article" date="2005" name="PLoS Biol.">
        <title>The genomes of Oryza sativa: a history of duplications.</title>
        <authorList>
            <person name="Yu J."/>
            <person name="Wang J."/>
            <person name="Lin W."/>
            <person name="Li S."/>
            <person name="Li H."/>
            <person name="Zhou J."/>
            <person name="Ni P."/>
            <person name="Dong W."/>
            <person name="Hu S."/>
            <person name="Zeng C."/>
            <person name="Zhang J."/>
            <person name="Zhang Y."/>
            <person name="Li R."/>
            <person name="Xu Z."/>
            <person name="Li S."/>
            <person name="Li X."/>
            <person name="Zheng H."/>
            <person name="Cong L."/>
            <person name="Lin L."/>
            <person name="Yin J."/>
            <person name="Geng J."/>
            <person name="Li G."/>
            <person name="Shi J."/>
            <person name="Liu J."/>
            <person name="Lv H."/>
            <person name="Li J."/>
            <person name="Wang J."/>
            <person name="Deng Y."/>
            <person name="Ran L."/>
            <person name="Shi X."/>
            <person name="Wang X."/>
            <person name="Wu Q."/>
            <person name="Li C."/>
            <person name="Ren X."/>
            <person name="Wang J."/>
            <person name="Wang X."/>
            <person name="Li D."/>
            <person name="Liu D."/>
            <person name="Zhang X."/>
            <person name="Ji Z."/>
            <person name="Zhao W."/>
            <person name="Sun Y."/>
            <person name="Zhang Z."/>
            <person name="Bao J."/>
            <person name="Han Y."/>
            <person name="Dong L."/>
            <person name="Ji J."/>
            <person name="Chen P."/>
            <person name="Wu S."/>
            <person name="Liu J."/>
            <person name="Xiao Y."/>
            <person name="Bu D."/>
            <person name="Tan J."/>
            <person name="Yang L."/>
            <person name="Ye C."/>
            <person name="Zhang J."/>
            <person name="Xu J."/>
            <person name="Zhou Y."/>
            <person name="Yu Y."/>
            <person name="Zhang B."/>
            <person name="Zhuang S."/>
            <person name="Wei H."/>
            <person name="Liu B."/>
            <person name="Lei M."/>
            <person name="Yu H."/>
            <person name="Li Y."/>
            <person name="Xu H."/>
            <person name="Wei S."/>
            <person name="He X."/>
            <person name="Fang L."/>
            <person name="Zhang Z."/>
            <person name="Zhang Y."/>
            <person name="Huang X."/>
            <person name="Su Z."/>
            <person name="Tong W."/>
            <person name="Li J."/>
            <person name="Tong Z."/>
            <person name="Li S."/>
            <person name="Ye J."/>
            <person name="Wang L."/>
            <person name="Fang L."/>
            <person name="Lei T."/>
            <person name="Chen C.-S."/>
            <person name="Chen H.-C."/>
            <person name="Xu Z."/>
            <person name="Li H."/>
            <person name="Huang H."/>
            <person name="Zhang F."/>
            <person name="Xu H."/>
            <person name="Li N."/>
            <person name="Zhao C."/>
            <person name="Li S."/>
            <person name="Dong L."/>
            <person name="Huang Y."/>
            <person name="Li L."/>
            <person name="Xi Y."/>
            <person name="Qi Q."/>
            <person name="Li W."/>
            <person name="Zhang B."/>
            <person name="Hu W."/>
            <person name="Zhang Y."/>
            <person name="Tian X."/>
            <person name="Jiao Y."/>
            <person name="Liang X."/>
            <person name="Jin J."/>
            <person name="Gao L."/>
            <person name="Zheng W."/>
            <person name="Hao B."/>
            <person name="Liu S.-M."/>
            <person name="Wang W."/>
            <person name="Yuan L."/>
            <person name="Cao M."/>
            <person name="McDermott J."/>
            <person name="Samudrala R."/>
            <person name="Wang J."/>
            <person name="Wong G.K.-S."/>
            <person name="Yang H."/>
        </authorList>
    </citation>
    <scope>NUCLEOTIDE SEQUENCE [LARGE SCALE GENOMIC DNA]</scope>
    <source>
        <strain>cv. Nipponbare</strain>
    </source>
</reference>
<reference key="6">
    <citation type="journal article" date="2003" name="Science">
        <title>Collection, mapping, and annotation of over 28,000 cDNA clones from japonica rice.</title>
        <authorList>
            <consortium name="The rice full-length cDNA consortium"/>
        </authorList>
    </citation>
    <scope>NUCLEOTIDE SEQUENCE [LARGE SCALE MRNA]</scope>
    <source>
        <strain>cv. Nipponbare</strain>
    </source>
</reference>
<reference key="7">
    <citation type="journal article" date="2008" name="BMC Genomics">
        <title>Genome-wide and expression analysis of protein phosphatase 2C in rice and Arabidopsis.</title>
        <authorList>
            <person name="Xue T."/>
            <person name="Wang D."/>
            <person name="Zhang S."/>
            <person name="Ehlting J."/>
            <person name="Ni F."/>
            <person name="Jacab S."/>
            <person name="Zheng C."/>
            <person name="Zhong Y."/>
        </authorList>
    </citation>
    <scope>GENE FAMILY</scope>
    <scope>NOMENCLATURE</scope>
</reference>
<evidence type="ECO:0000250" key="1"/>
<evidence type="ECO:0000255" key="2">
    <source>
        <dbReference type="PROSITE-ProRule" id="PRU01082"/>
    </source>
</evidence>
<evidence type="ECO:0000256" key="3">
    <source>
        <dbReference type="SAM" id="MobiDB-lite"/>
    </source>
</evidence>
<evidence type="ECO:0000305" key="4"/>
<evidence type="ECO:0000312" key="5">
    <source>
        <dbReference type="EMBL" id="EEE50841.1"/>
    </source>
</evidence>
<keyword id="KW-0378">Hydrolase</keyword>
<keyword id="KW-0460">Magnesium</keyword>
<keyword id="KW-0464">Manganese</keyword>
<keyword id="KW-0479">Metal-binding</keyword>
<keyword id="KW-0904">Protein phosphatase</keyword>
<keyword id="KW-1185">Reference proteome</keyword>
<comment type="catalytic activity">
    <reaction>
        <text>O-phospho-L-seryl-[protein] + H2O = L-seryl-[protein] + phosphate</text>
        <dbReference type="Rhea" id="RHEA:20629"/>
        <dbReference type="Rhea" id="RHEA-COMP:9863"/>
        <dbReference type="Rhea" id="RHEA-COMP:11604"/>
        <dbReference type="ChEBI" id="CHEBI:15377"/>
        <dbReference type="ChEBI" id="CHEBI:29999"/>
        <dbReference type="ChEBI" id="CHEBI:43474"/>
        <dbReference type="ChEBI" id="CHEBI:83421"/>
        <dbReference type="EC" id="3.1.3.16"/>
    </reaction>
</comment>
<comment type="catalytic activity">
    <reaction>
        <text>O-phospho-L-threonyl-[protein] + H2O = L-threonyl-[protein] + phosphate</text>
        <dbReference type="Rhea" id="RHEA:47004"/>
        <dbReference type="Rhea" id="RHEA-COMP:11060"/>
        <dbReference type="Rhea" id="RHEA-COMP:11605"/>
        <dbReference type="ChEBI" id="CHEBI:15377"/>
        <dbReference type="ChEBI" id="CHEBI:30013"/>
        <dbReference type="ChEBI" id="CHEBI:43474"/>
        <dbReference type="ChEBI" id="CHEBI:61977"/>
        <dbReference type="EC" id="3.1.3.16"/>
    </reaction>
</comment>
<comment type="cofactor">
    <cofactor evidence="1">
        <name>Mg(2+)</name>
        <dbReference type="ChEBI" id="CHEBI:18420"/>
    </cofactor>
    <cofactor evidence="1">
        <name>Mn(2+)</name>
        <dbReference type="ChEBI" id="CHEBI:29035"/>
    </cofactor>
    <text evidence="1">Binds 2 magnesium or manganese ions per subunit.</text>
</comment>
<comment type="similarity">
    <text evidence="4">Belongs to the PP2C family.</text>
</comment>
<comment type="sequence caution" evidence="4">
    <conflict type="erroneous gene model prediction">
        <sequence resource="EMBL-CDS" id="AAM08826"/>
    </conflict>
</comment>
<sequence>MAELPLAAGLLDLRPCKLAPPPPPPLPVSPSPRHHRRPHSTATACRAAPDLHSSTELADGSIVFRFARPRDDDDEEQQQRRADAVAPEAAAVVESGLDGDAAAAAEPEARDGGGEGEVTATATGLDAEEVVASGGAEATATSGLEDAGEEASDGSTARDSDTDVDTESSASTAADDDQPAEFAVPPPPAEEVCNKVDWEKDTSEVKNTDRMVPVASSTLVLASGAAILPHPSKAATGGEDAYFIACDGWFGVADGVGQWSFEGINAGLYARELMDGCKKFIMENQGAADIKPEQVLSKAADEAHSPGSSTVLVAHFDGQFLNASNIGDSGFLVIRNGEVYQKSKPMVYGFNFPLQIEKGDNPLKLVQNYTIELEDGDVIVTASDGLFDNVYEQEVATMVSKSLQADLKPTEIAEHLAAKAQEVGRSAAGSTPFSDAALAVGYLGFSGGKLDDIAVVVSIVRKSEI</sequence>
<dbReference type="EC" id="3.1.3.16"/>
<dbReference type="EMBL" id="AC113335">
    <property type="protein sequence ID" value="AAM08826.1"/>
    <property type="status" value="ALT_SEQ"/>
    <property type="molecule type" value="Genomic_DNA"/>
</dbReference>
<dbReference type="EMBL" id="DP000086">
    <property type="protein sequence ID" value="ABB47348.1"/>
    <property type="molecule type" value="Genomic_DNA"/>
</dbReference>
<dbReference type="EMBL" id="AP008216">
    <property type="protein sequence ID" value="BAF26369.1"/>
    <property type="molecule type" value="Genomic_DNA"/>
</dbReference>
<dbReference type="EMBL" id="AP014966">
    <property type="protein sequence ID" value="BAT10555.1"/>
    <property type="molecule type" value="Genomic_DNA"/>
</dbReference>
<dbReference type="EMBL" id="CM000147">
    <property type="protein sequence ID" value="EEE50841.1"/>
    <property type="molecule type" value="Genomic_DNA"/>
</dbReference>
<dbReference type="EMBL" id="AK100049">
    <property type="protein sequence ID" value="BAG94416.1"/>
    <property type="molecule type" value="mRNA"/>
</dbReference>
<dbReference type="RefSeq" id="XP_015614734.1">
    <property type="nucleotide sequence ID" value="XM_015759248.1"/>
</dbReference>
<dbReference type="SMR" id="Q339D2"/>
<dbReference type="STRING" id="39947.Q339D2"/>
<dbReference type="PaxDb" id="39947-Q339D2"/>
<dbReference type="EnsemblPlants" id="Os10t0370000-01">
    <property type="protein sequence ID" value="Os10t0370000-01"/>
    <property type="gene ID" value="Os10g0370000"/>
</dbReference>
<dbReference type="EnsemblPlants" id="Os10t0370000-02">
    <property type="protein sequence ID" value="Os10t0370000-02"/>
    <property type="gene ID" value="Os10g0370000"/>
</dbReference>
<dbReference type="Gramene" id="Os10t0370000-01">
    <property type="protein sequence ID" value="Os10t0370000-01"/>
    <property type="gene ID" value="Os10g0370000"/>
</dbReference>
<dbReference type="Gramene" id="Os10t0370000-02">
    <property type="protein sequence ID" value="Os10t0370000-02"/>
    <property type="gene ID" value="Os10g0370000"/>
</dbReference>
<dbReference type="KEGG" id="dosa:Os10g0370000"/>
<dbReference type="eggNOG" id="KOG1379">
    <property type="taxonomic scope" value="Eukaryota"/>
</dbReference>
<dbReference type="HOGENOM" id="CLU_029404_8_0_1"/>
<dbReference type="InParanoid" id="Q339D2"/>
<dbReference type="OMA" id="AWFKTVT"/>
<dbReference type="OrthoDB" id="60843at2759"/>
<dbReference type="Proteomes" id="UP000000763">
    <property type="component" value="Chromosome 10"/>
</dbReference>
<dbReference type="Proteomes" id="UP000007752">
    <property type="component" value="Chromosome 10"/>
</dbReference>
<dbReference type="Proteomes" id="UP000059680">
    <property type="component" value="Chromosome 10"/>
</dbReference>
<dbReference type="GO" id="GO:0046872">
    <property type="term" value="F:metal ion binding"/>
    <property type="evidence" value="ECO:0007669"/>
    <property type="project" value="UniProtKB-KW"/>
</dbReference>
<dbReference type="GO" id="GO:0004722">
    <property type="term" value="F:protein serine/threonine phosphatase activity"/>
    <property type="evidence" value="ECO:0000318"/>
    <property type="project" value="GO_Central"/>
</dbReference>
<dbReference type="Gene3D" id="3.60.40.10">
    <property type="entry name" value="PPM-type phosphatase domain"/>
    <property type="match status" value="2"/>
</dbReference>
<dbReference type="InterPro" id="IPR036457">
    <property type="entry name" value="PPM-type-like_dom_sf"/>
</dbReference>
<dbReference type="InterPro" id="IPR001932">
    <property type="entry name" value="PPM-type_phosphatase-like_dom"/>
</dbReference>
<dbReference type="InterPro" id="IPR039123">
    <property type="entry name" value="PPTC7"/>
</dbReference>
<dbReference type="PANTHER" id="PTHR12320">
    <property type="entry name" value="PROTEIN PHOSPHATASE 2C"/>
    <property type="match status" value="1"/>
</dbReference>
<dbReference type="PANTHER" id="PTHR12320:SF1">
    <property type="entry name" value="PROTEIN PHOSPHATASE PTC7 HOMOLOG"/>
    <property type="match status" value="1"/>
</dbReference>
<dbReference type="Pfam" id="PF13672">
    <property type="entry name" value="PP2C_2"/>
    <property type="match status" value="1"/>
</dbReference>
<dbReference type="SMART" id="SM00331">
    <property type="entry name" value="PP2C_SIG"/>
    <property type="match status" value="1"/>
</dbReference>
<dbReference type="SMART" id="SM00332">
    <property type="entry name" value="PP2Cc"/>
    <property type="match status" value="1"/>
</dbReference>
<dbReference type="SUPFAM" id="SSF81606">
    <property type="entry name" value="PP2C-like"/>
    <property type="match status" value="1"/>
</dbReference>
<dbReference type="PROSITE" id="PS51746">
    <property type="entry name" value="PPM_2"/>
    <property type="match status" value="1"/>
</dbReference>
<protein>
    <recommendedName>
        <fullName>Probable protein phosphatase 2C 71</fullName>
        <shortName>OsPP2C71</shortName>
        <ecNumber>3.1.3.16</ecNumber>
    </recommendedName>
</protein>
<organism>
    <name type="scientific">Oryza sativa subsp. japonica</name>
    <name type="common">Rice</name>
    <dbReference type="NCBI Taxonomy" id="39947"/>
    <lineage>
        <taxon>Eukaryota</taxon>
        <taxon>Viridiplantae</taxon>
        <taxon>Streptophyta</taxon>
        <taxon>Embryophyta</taxon>
        <taxon>Tracheophyta</taxon>
        <taxon>Spermatophyta</taxon>
        <taxon>Magnoliopsida</taxon>
        <taxon>Liliopsida</taxon>
        <taxon>Poales</taxon>
        <taxon>Poaceae</taxon>
        <taxon>BOP clade</taxon>
        <taxon>Oryzoideae</taxon>
        <taxon>Oryzeae</taxon>
        <taxon>Oryzinae</taxon>
        <taxon>Oryza</taxon>
        <taxon>Oryza sativa</taxon>
    </lineage>
</organism>
<accession>Q339D2</accession>
<accession>A3C435</accession>
<accession>B9G5E4</accession>
<accession>Q8S5N3</accession>
<gene>
    <name type="ordered locus">Os10g0370000</name>
    <name type="ordered locus">LOC_Os10g22460</name>
    <name type="ORF">OJ1003C07.6</name>
    <name type="ORF">OsJ_030057</name>
    <name evidence="5" type="ORF">OsJ_31268</name>
</gene>
<name>P2C71_ORYSJ</name>